<sequence length="367" mass="41035">MSLADQVLAVNDDLPIRTDKPVHSGKVRSVYWLTPEDSARLIKEKGYDVPADAPLALMVISDRISAFDCIWQGVDGLNGVPGKGAALNAISSHWFKLFKEKGLADSHILDIPHPFVWIVQKARPVMIEAIARQYITGSMWRAYKDGEREFCGITLPEGLKKDQKLPEILITPSTKGVLTGLDGVPEADDVNVSRADIERHYQGFNFSKPADIDRYEVLLKEGFNVISDALASLDQIFVDTKFEFGYVQDAAGNEKLIYMDEVGTPDSSRIWDGAALRDGQIVEKSKEGFRQWLLNHFPDPDILLNKNRMPERFALAKGNKLPTEVMMDISNTYVGIAEKIIGHPLVRSANPKQEIIEVLRDQYGLID</sequence>
<protein>
    <recommendedName>
        <fullName evidence="1">Phosphoribosylaminoimidazole-succinocarboxamide synthase</fullName>
        <ecNumber evidence="1">6.3.2.6</ecNumber>
    </recommendedName>
    <alternativeName>
        <fullName evidence="1">SAICAR synthetase</fullName>
    </alternativeName>
</protein>
<gene>
    <name evidence="1" type="primary">purC</name>
    <name type="ordered locus">ASA_3394</name>
</gene>
<proteinExistence type="inferred from homology"/>
<feature type="chain" id="PRO_1000117821" description="Phosphoribosylaminoimidazole-succinocarboxamide synthase">
    <location>
        <begin position="1"/>
        <end position="367"/>
    </location>
</feature>
<evidence type="ECO:0000255" key="1">
    <source>
        <dbReference type="HAMAP-Rule" id="MF_00137"/>
    </source>
</evidence>
<dbReference type="EC" id="6.3.2.6" evidence="1"/>
<dbReference type="EMBL" id="CP000644">
    <property type="protein sequence ID" value="ABO91369.1"/>
    <property type="molecule type" value="Genomic_DNA"/>
</dbReference>
<dbReference type="RefSeq" id="WP_005311616.1">
    <property type="nucleotide sequence ID" value="NC_009348.1"/>
</dbReference>
<dbReference type="SMR" id="A4SR47"/>
<dbReference type="STRING" id="29491.GCA_000820065_03789"/>
<dbReference type="KEGG" id="asa:ASA_3394"/>
<dbReference type="eggNOG" id="COG0152">
    <property type="taxonomic scope" value="Bacteria"/>
</dbReference>
<dbReference type="HOGENOM" id="CLU_064197_0_0_6"/>
<dbReference type="UniPathway" id="UPA00074">
    <property type="reaction ID" value="UER00131"/>
</dbReference>
<dbReference type="Proteomes" id="UP000000225">
    <property type="component" value="Chromosome"/>
</dbReference>
<dbReference type="GO" id="GO:0005737">
    <property type="term" value="C:cytoplasm"/>
    <property type="evidence" value="ECO:0007669"/>
    <property type="project" value="TreeGrafter"/>
</dbReference>
<dbReference type="GO" id="GO:0005524">
    <property type="term" value="F:ATP binding"/>
    <property type="evidence" value="ECO:0007669"/>
    <property type="project" value="UniProtKB-KW"/>
</dbReference>
<dbReference type="GO" id="GO:0004639">
    <property type="term" value="F:phosphoribosylaminoimidazolesuccinocarboxamide synthase activity"/>
    <property type="evidence" value="ECO:0007669"/>
    <property type="project" value="UniProtKB-UniRule"/>
</dbReference>
<dbReference type="GO" id="GO:0006189">
    <property type="term" value="P:'de novo' IMP biosynthetic process"/>
    <property type="evidence" value="ECO:0007669"/>
    <property type="project" value="UniProtKB-UniRule"/>
</dbReference>
<dbReference type="CDD" id="cd01414">
    <property type="entry name" value="SAICAR_synt_Sc"/>
    <property type="match status" value="1"/>
</dbReference>
<dbReference type="Gene3D" id="3.30.470.20">
    <property type="entry name" value="ATP-grasp fold, B domain"/>
    <property type="match status" value="1"/>
</dbReference>
<dbReference type="Gene3D" id="3.30.200.20">
    <property type="entry name" value="Phosphorylase Kinase, domain 1"/>
    <property type="match status" value="1"/>
</dbReference>
<dbReference type="HAMAP" id="MF_00137">
    <property type="entry name" value="SAICAR_synth"/>
    <property type="match status" value="1"/>
</dbReference>
<dbReference type="InterPro" id="IPR028923">
    <property type="entry name" value="SAICAR_synt/ADE2_N"/>
</dbReference>
<dbReference type="InterPro" id="IPR014106">
    <property type="entry name" value="SAICAR_synthase_Vibrio-typ"/>
</dbReference>
<dbReference type="NCBIfam" id="NF010567">
    <property type="entry name" value="PRK13960.1"/>
    <property type="match status" value="1"/>
</dbReference>
<dbReference type="NCBIfam" id="TIGR02735">
    <property type="entry name" value="purC_vibrio"/>
    <property type="match status" value="1"/>
</dbReference>
<dbReference type="PANTHER" id="PTHR43700">
    <property type="entry name" value="PHOSPHORIBOSYLAMINOIMIDAZOLE-SUCCINOCARBOXAMIDE SYNTHASE"/>
    <property type="match status" value="1"/>
</dbReference>
<dbReference type="PANTHER" id="PTHR43700:SF1">
    <property type="entry name" value="PHOSPHORIBOSYLAMINOIMIDAZOLE-SUCCINOCARBOXAMIDE SYNTHASE"/>
    <property type="match status" value="1"/>
</dbReference>
<dbReference type="Pfam" id="PF01259">
    <property type="entry name" value="SAICAR_synt"/>
    <property type="match status" value="1"/>
</dbReference>
<dbReference type="SUPFAM" id="SSF56104">
    <property type="entry name" value="SAICAR synthase-like"/>
    <property type="match status" value="1"/>
</dbReference>
<name>PUR7_AERS4</name>
<accession>A4SR47</accession>
<organism>
    <name type="scientific">Aeromonas salmonicida (strain A449)</name>
    <dbReference type="NCBI Taxonomy" id="382245"/>
    <lineage>
        <taxon>Bacteria</taxon>
        <taxon>Pseudomonadati</taxon>
        <taxon>Pseudomonadota</taxon>
        <taxon>Gammaproteobacteria</taxon>
        <taxon>Aeromonadales</taxon>
        <taxon>Aeromonadaceae</taxon>
        <taxon>Aeromonas</taxon>
    </lineage>
</organism>
<comment type="catalytic activity">
    <reaction evidence="1">
        <text>5-amino-1-(5-phospho-D-ribosyl)imidazole-4-carboxylate + L-aspartate + ATP = (2S)-2-[5-amino-1-(5-phospho-beta-D-ribosyl)imidazole-4-carboxamido]succinate + ADP + phosphate + 2 H(+)</text>
        <dbReference type="Rhea" id="RHEA:22628"/>
        <dbReference type="ChEBI" id="CHEBI:15378"/>
        <dbReference type="ChEBI" id="CHEBI:29991"/>
        <dbReference type="ChEBI" id="CHEBI:30616"/>
        <dbReference type="ChEBI" id="CHEBI:43474"/>
        <dbReference type="ChEBI" id="CHEBI:58443"/>
        <dbReference type="ChEBI" id="CHEBI:77657"/>
        <dbReference type="ChEBI" id="CHEBI:456216"/>
        <dbReference type="EC" id="6.3.2.6"/>
    </reaction>
</comment>
<comment type="pathway">
    <text evidence="1">Purine metabolism; IMP biosynthesis via de novo pathway; 5-amino-1-(5-phospho-D-ribosyl)imidazole-4-carboxamide from 5-amino-1-(5-phospho-D-ribosyl)imidazole-4-carboxylate: step 1/2.</text>
</comment>
<comment type="similarity">
    <text evidence="1">Belongs to the SAICAR synthetase family.</text>
</comment>
<keyword id="KW-0067">ATP-binding</keyword>
<keyword id="KW-0436">Ligase</keyword>
<keyword id="KW-0547">Nucleotide-binding</keyword>
<keyword id="KW-0658">Purine biosynthesis</keyword>
<reference key="1">
    <citation type="journal article" date="2008" name="BMC Genomics">
        <title>The genome of Aeromonas salmonicida subsp. salmonicida A449: insights into the evolution of a fish pathogen.</title>
        <authorList>
            <person name="Reith M.E."/>
            <person name="Singh R.K."/>
            <person name="Curtis B."/>
            <person name="Boyd J.M."/>
            <person name="Bouevitch A."/>
            <person name="Kimball J."/>
            <person name="Munholland J."/>
            <person name="Murphy C."/>
            <person name="Sarty D."/>
            <person name="Williams J."/>
            <person name="Nash J.H."/>
            <person name="Johnson S.C."/>
            <person name="Brown L.L."/>
        </authorList>
    </citation>
    <scope>NUCLEOTIDE SEQUENCE [LARGE SCALE GENOMIC DNA]</scope>
    <source>
        <strain>A449</strain>
    </source>
</reference>